<sequence>AVATALIQVAYMGLVGSFPFNSFLSGVLSCIGTAVLAVCLRIQVNKDNKEFKDLPPERAFADFVLCNLVLHLVIMNFLG</sequence>
<name>DAD1_MAIZE</name>
<accession>O81214</accession>
<protein>
    <recommendedName>
        <fullName>Dolichyl-diphosphooligosaccharide--protein glycosyltransferase subunit DAD1</fullName>
        <shortName>Oligosaccharyl transferase subunit DAD1</shortName>
    </recommendedName>
    <alternativeName>
        <fullName>Defender against cell death 1</fullName>
        <shortName>DAD-1</shortName>
    </alternativeName>
</protein>
<dbReference type="EMBL" id="AF055909">
    <property type="protein sequence ID" value="AAC24568.2"/>
    <property type="molecule type" value="mRNA"/>
</dbReference>
<dbReference type="PIR" id="T01646">
    <property type="entry name" value="T01646"/>
</dbReference>
<dbReference type="SMR" id="O81214"/>
<dbReference type="STRING" id="4577.O81214"/>
<dbReference type="PaxDb" id="4577-GRMZM5G847530_P01"/>
<dbReference type="eggNOG" id="KOG1746">
    <property type="taxonomic scope" value="Eukaryota"/>
</dbReference>
<dbReference type="InParanoid" id="O81214"/>
<dbReference type="UniPathway" id="UPA00378"/>
<dbReference type="Proteomes" id="UP000007305">
    <property type="component" value="Unplaced"/>
</dbReference>
<dbReference type="ExpressionAtlas" id="O81214">
    <property type="expression patterns" value="baseline and differential"/>
</dbReference>
<dbReference type="GO" id="GO:0008250">
    <property type="term" value="C:oligosaccharyltransferase complex"/>
    <property type="evidence" value="ECO:0007669"/>
    <property type="project" value="InterPro"/>
</dbReference>
<dbReference type="GO" id="GO:0006486">
    <property type="term" value="P:protein glycosylation"/>
    <property type="evidence" value="ECO:0007669"/>
    <property type="project" value="UniProtKB-UniPathway"/>
</dbReference>
<dbReference type="InterPro" id="IPR003038">
    <property type="entry name" value="DAD/Ost2"/>
</dbReference>
<dbReference type="PANTHER" id="PTHR10705">
    <property type="entry name" value="DOLICHYL-DIPHOSPHOOLIGOSACCHARIDE--PROTEIN GLYCOSYLTRANSFERASE SUBUNIT DAD1"/>
    <property type="match status" value="1"/>
</dbReference>
<dbReference type="PANTHER" id="PTHR10705:SF0">
    <property type="entry name" value="DOLICHYL-DIPHOSPHOOLIGOSACCHARIDE--PROTEIN GLYCOSYLTRANSFERASE SUBUNIT DAD1"/>
    <property type="match status" value="1"/>
</dbReference>
<dbReference type="Pfam" id="PF02109">
    <property type="entry name" value="DAD"/>
    <property type="match status" value="1"/>
</dbReference>
<evidence type="ECO:0000250" key="1"/>
<evidence type="ECO:0000250" key="2">
    <source>
        <dbReference type="UniProtKB" id="P46964"/>
    </source>
</evidence>
<evidence type="ECO:0000255" key="3"/>
<evidence type="ECO:0000305" key="4"/>
<gene>
    <name type="primary">DAD1</name>
</gene>
<comment type="function">
    <text evidence="2">Subunit of the oligosaccharyl transferase (OST) complex that catalyzes the initial transfer of a defined glycan (Glc(3)Man(9)GlcNAc(2) in eukaryotes) from the lipid carrier dolichol-pyrophosphate to an asparagine residue within an Asn-X-Ser/Thr consensus motif in nascent polypeptide chains, the first step in protein N-glycosylation. N-glycosylation occurs cotranslationally and the complex associates with the Sec61 complex at the channel-forming translocon complex that mediates protein translocation across the endoplasmic reticulum (ER). All subunits are required for a maximal enzyme activity.</text>
</comment>
<comment type="pathway">
    <text>Protein modification; protein glycosylation.</text>
</comment>
<comment type="subunit">
    <text evidence="2">Component of the oligosaccharyltransferase (OST) complex.</text>
</comment>
<comment type="subcellular location">
    <subcellularLocation>
        <location evidence="1">Endoplasmic reticulum membrane</location>
        <topology evidence="1">Multi-pass membrane protein</topology>
    </subcellularLocation>
</comment>
<comment type="similarity">
    <text evidence="4">Belongs to the DAD/OST2 family.</text>
</comment>
<feature type="chain" id="PRO_0000124027" description="Dolichyl-diphosphooligosaccharide--protein glycosyltransferase subunit DAD1">
    <location>
        <begin position="1" status="less than"/>
        <end position="79"/>
    </location>
</feature>
<feature type="topological domain" description="Lumenal" evidence="3">
    <location>
        <begin position="1"/>
        <end position="19"/>
    </location>
</feature>
<feature type="transmembrane region" description="Helical" evidence="3">
    <location>
        <begin position="20"/>
        <end position="40"/>
    </location>
</feature>
<feature type="topological domain" description="Cytoplasmic" evidence="3">
    <location>
        <begin position="41"/>
        <end position="58"/>
    </location>
</feature>
<feature type="transmembrane region" description="Helical" evidence="3">
    <location>
        <begin position="59"/>
        <end position="79"/>
    </location>
</feature>
<feature type="non-terminal residue">
    <location>
        <position position="1"/>
    </location>
</feature>
<keyword id="KW-0053">Apoptosis</keyword>
<keyword id="KW-0256">Endoplasmic reticulum</keyword>
<keyword id="KW-0472">Membrane</keyword>
<keyword id="KW-1185">Reference proteome</keyword>
<keyword id="KW-0812">Transmembrane</keyword>
<keyword id="KW-1133">Transmembrane helix</keyword>
<proteinExistence type="evidence at transcript level"/>
<reference key="1">
    <citation type="submission" date="1999-05" db="EMBL/GenBank/DDBJ databases">
        <title>Apoptotic gene discovery in maize.</title>
        <authorList>
            <person name="Finkelstein D.B."/>
            <person name="Drew M.C."/>
            <person name="Jordan W.R."/>
            <person name="Wing R.A."/>
            <person name="Mullet J.E."/>
            <person name="Morgan P.W."/>
        </authorList>
    </citation>
    <scope>NUCLEOTIDE SEQUENCE [MRNA]</scope>
    <source>
        <strain>cv. Texas 5855</strain>
        <tissue>Root tip</tissue>
    </source>
</reference>
<organism>
    <name type="scientific">Zea mays</name>
    <name type="common">Maize</name>
    <dbReference type="NCBI Taxonomy" id="4577"/>
    <lineage>
        <taxon>Eukaryota</taxon>
        <taxon>Viridiplantae</taxon>
        <taxon>Streptophyta</taxon>
        <taxon>Embryophyta</taxon>
        <taxon>Tracheophyta</taxon>
        <taxon>Spermatophyta</taxon>
        <taxon>Magnoliopsida</taxon>
        <taxon>Liliopsida</taxon>
        <taxon>Poales</taxon>
        <taxon>Poaceae</taxon>
        <taxon>PACMAD clade</taxon>
        <taxon>Panicoideae</taxon>
        <taxon>Andropogonodae</taxon>
        <taxon>Andropogoneae</taxon>
        <taxon>Tripsacinae</taxon>
        <taxon>Zea</taxon>
    </lineage>
</organism>